<reference key="1">
    <citation type="journal article" date="2000" name="Nature">
        <title>Sequence and analysis of chromosome 5 of the plant Arabidopsis thaliana.</title>
        <authorList>
            <person name="Tabata S."/>
            <person name="Kaneko T."/>
            <person name="Nakamura Y."/>
            <person name="Kotani H."/>
            <person name="Kato T."/>
            <person name="Asamizu E."/>
            <person name="Miyajima N."/>
            <person name="Sasamoto S."/>
            <person name="Kimura T."/>
            <person name="Hosouchi T."/>
            <person name="Kawashima K."/>
            <person name="Kohara M."/>
            <person name="Matsumoto M."/>
            <person name="Matsuno A."/>
            <person name="Muraki A."/>
            <person name="Nakayama S."/>
            <person name="Nakazaki N."/>
            <person name="Naruo K."/>
            <person name="Okumura S."/>
            <person name="Shinpo S."/>
            <person name="Takeuchi C."/>
            <person name="Wada T."/>
            <person name="Watanabe A."/>
            <person name="Yamada M."/>
            <person name="Yasuda M."/>
            <person name="Sato S."/>
            <person name="de la Bastide M."/>
            <person name="Huang E."/>
            <person name="Spiegel L."/>
            <person name="Gnoj L."/>
            <person name="O'Shaughnessy A."/>
            <person name="Preston R."/>
            <person name="Habermann K."/>
            <person name="Murray J."/>
            <person name="Johnson D."/>
            <person name="Rohlfing T."/>
            <person name="Nelson J."/>
            <person name="Stoneking T."/>
            <person name="Pepin K."/>
            <person name="Spieth J."/>
            <person name="Sekhon M."/>
            <person name="Armstrong J."/>
            <person name="Becker M."/>
            <person name="Belter E."/>
            <person name="Cordum H."/>
            <person name="Cordes M."/>
            <person name="Courtney L."/>
            <person name="Courtney W."/>
            <person name="Dante M."/>
            <person name="Du H."/>
            <person name="Edwards J."/>
            <person name="Fryman J."/>
            <person name="Haakensen B."/>
            <person name="Lamar E."/>
            <person name="Latreille P."/>
            <person name="Leonard S."/>
            <person name="Meyer R."/>
            <person name="Mulvaney E."/>
            <person name="Ozersky P."/>
            <person name="Riley A."/>
            <person name="Strowmatt C."/>
            <person name="Wagner-McPherson C."/>
            <person name="Wollam A."/>
            <person name="Yoakum M."/>
            <person name="Bell M."/>
            <person name="Dedhia N."/>
            <person name="Parnell L."/>
            <person name="Shah R."/>
            <person name="Rodriguez M."/>
            <person name="Hoon See L."/>
            <person name="Vil D."/>
            <person name="Baker J."/>
            <person name="Kirchoff K."/>
            <person name="Toth K."/>
            <person name="King L."/>
            <person name="Bahret A."/>
            <person name="Miller B."/>
            <person name="Marra M.A."/>
            <person name="Martienssen R."/>
            <person name="McCombie W.R."/>
            <person name="Wilson R.K."/>
            <person name="Murphy G."/>
            <person name="Bancroft I."/>
            <person name="Volckaert G."/>
            <person name="Wambutt R."/>
            <person name="Duesterhoeft A."/>
            <person name="Stiekema W."/>
            <person name="Pohl T."/>
            <person name="Entian K.-D."/>
            <person name="Terryn N."/>
            <person name="Hartley N."/>
            <person name="Bent E."/>
            <person name="Johnson S."/>
            <person name="Langham S.-A."/>
            <person name="McCullagh B."/>
            <person name="Robben J."/>
            <person name="Grymonprez B."/>
            <person name="Zimmermann W."/>
            <person name="Ramsperger U."/>
            <person name="Wedler H."/>
            <person name="Balke K."/>
            <person name="Wedler E."/>
            <person name="Peters S."/>
            <person name="van Staveren M."/>
            <person name="Dirkse W."/>
            <person name="Mooijman P."/>
            <person name="Klein Lankhorst R."/>
            <person name="Weitzenegger T."/>
            <person name="Bothe G."/>
            <person name="Rose M."/>
            <person name="Hauf J."/>
            <person name="Berneiser S."/>
            <person name="Hempel S."/>
            <person name="Feldpausch M."/>
            <person name="Lamberth S."/>
            <person name="Villarroel R."/>
            <person name="Gielen J."/>
            <person name="Ardiles W."/>
            <person name="Bents O."/>
            <person name="Lemcke K."/>
            <person name="Kolesov G."/>
            <person name="Mayer K.F.X."/>
            <person name="Rudd S."/>
            <person name="Schoof H."/>
            <person name="Schueller C."/>
            <person name="Zaccaria P."/>
            <person name="Mewes H.-W."/>
            <person name="Bevan M."/>
            <person name="Fransz P.F."/>
        </authorList>
    </citation>
    <scope>NUCLEOTIDE SEQUENCE [LARGE SCALE GENOMIC DNA]</scope>
    <source>
        <strain>cv. Columbia</strain>
    </source>
</reference>
<reference key="2">
    <citation type="journal article" date="2017" name="Plant J.">
        <title>Araport11: a complete reannotation of the Arabidopsis thaliana reference genome.</title>
        <authorList>
            <person name="Cheng C.Y."/>
            <person name="Krishnakumar V."/>
            <person name="Chan A.P."/>
            <person name="Thibaud-Nissen F."/>
            <person name="Schobel S."/>
            <person name="Town C.D."/>
        </authorList>
    </citation>
    <scope>GENOME REANNOTATION</scope>
    <source>
        <strain>cv. Columbia</strain>
    </source>
</reference>
<reference key="3">
    <citation type="journal article" date="2003" name="Science">
        <title>Empirical analysis of transcriptional activity in the Arabidopsis genome.</title>
        <authorList>
            <person name="Yamada K."/>
            <person name="Lim J."/>
            <person name="Dale J.M."/>
            <person name="Chen H."/>
            <person name="Shinn P."/>
            <person name="Palm C.J."/>
            <person name="Southwick A.M."/>
            <person name="Wu H.C."/>
            <person name="Kim C.J."/>
            <person name="Nguyen M."/>
            <person name="Pham P.K."/>
            <person name="Cheuk R.F."/>
            <person name="Karlin-Newmann G."/>
            <person name="Liu S.X."/>
            <person name="Lam B."/>
            <person name="Sakano H."/>
            <person name="Wu T."/>
            <person name="Yu G."/>
            <person name="Miranda M."/>
            <person name="Quach H.L."/>
            <person name="Tripp M."/>
            <person name="Chang C.H."/>
            <person name="Lee J.M."/>
            <person name="Toriumi M.J."/>
            <person name="Chan M.M."/>
            <person name="Tang C.C."/>
            <person name="Onodera C.S."/>
            <person name="Deng J.M."/>
            <person name="Akiyama K."/>
            <person name="Ansari Y."/>
            <person name="Arakawa T."/>
            <person name="Banh J."/>
            <person name="Banno F."/>
            <person name="Bowser L."/>
            <person name="Brooks S.Y."/>
            <person name="Carninci P."/>
            <person name="Chao Q."/>
            <person name="Choy N."/>
            <person name="Enju A."/>
            <person name="Goldsmith A.D."/>
            <person name="Gurjal M."/>
            <person name="Hansen N.F."/>
            <person name="Hayashizaki Y."/>
            <person name="Johnson-Hopson C."/>
            <person name="Hsuan V.W."/>
            <person name="Iida K."/>
            <person name="Karnes M."/>
            <person name="Khan S."/>
            <person name="Koesema E."/>
            <person name="Ishida J."/>
            <person name="Jiang P.X."/>
            <person name="Jones T."/>
            <person name="Kawai J."/>
            <person name="Kamiya A."/>
            <person name="Meyers C."/>
            <person name="Nakajima M."/>
            <person name="Narusaka M."/>
            <person name="Seki M."/>
            <person name="Sakurai T."/>
            <person name="Satou M."/>
            <person name="Tamse R."/>
            <person name="Vaysberg M."/>
            <person name="Wallender E.K."/>
            <person name="Wong C."/>
            <person name="Yamamura Y."/>
            <person name="Yuan S."/>
            <person name="Shinozaki K."/>
            <person name="Davis R.W."/>
            <person name="Theologis A."/>
            <person name="Ecker J.R."/>
        </authorList>
    </citation>
    <scope>NUCLEOTIDE SEQUENCE [LARGE SCALE MRNA]</scope>
    <source>
        <strain>cv. Columbia</strain>
    </source>
</reference>
<reference key="4">
    <citation type="submission" date="2005-03" db="EMBL/GenBank/DDBJ databases">
        <title>Large-scale analysis of RIKEN Arabidopsis full-length (RAFL) cDNAs.</title>
        <authorList>
            <person name="Totoki Y."/>
            <person name="Seki M."/>
            <person name="Ishida J."/>
            <person name="Nakajima M."/>
            <person name="Enju A."/>
            <person name="Kamiya A."/>
            <person name="Narusaka M."/>
            <person name="Shin-i T."/>
            <person name="Nakagawa M."/>
            <person name="Sakamoto N."/>
            <person name="Oishi K."/>
            <person name="Kohara Y."/>
            <person name="Kobayashi M."/>
            <person name="Toyoda A."/>
            <person name="Sakaki Y."/>
            <person name="Sakurai T."/>
            <person name="Iida K."/>
            <person name="Akiyama K."/>
            <person name="Satou M."/>
            <person name="Toyoda T."/>
            <person name="Konagaya A."/>
            <person name="Carninci P."/>
            <person name="Kawai J."/>
            <person name="Hayashizaki Y."/>
            <person name="Shinozaki K."/>
        </authorList>
    </citation>
    <scope>NUCLEOTIDE SEQUENCE [LARGE SCALE MRNA] OF 475-826</scope>
    <source>
        <strain>cv. Columbia</strain>
    </source>
</reference>
<reference key="5">
    <citation type="journal article" date="2008" name="J. Proteome Res.">
        <title>Site-specific phosphorylation profiling of Arabidopsis proteins by mass spectrometry and peptide chip analysis.</title>
        <authorList>
            <person name="de la Fuente van Bentem S."/>
            <person name="Anrather D."/>
            <person name="Dohnal I."/>
            <person name="Roitinger E."/>
            <person name="Csaszar E."/>
            <person name="Joore J."/>
            <person name="Buijnink J."/>
            <person name="Carreri A."/>
            <person name="Forzani C."/>
            <person name="Lorkovic Z.J."/>
            <person name="Barta A."/>
            <person name="Lecourieux D."/>
            <person name="Verhounig A."/>
            <person name="Jonak C."/>
            <person name="Hirt H."/>
        </authorList>
    </citation>
    <scope>PHOSPHORYLATION [LARGE SCALE ANALYSIS] AT SER-378 AND SER-381</scope>
    <scope>IDENTIFICATION BY MASS SPECTROMETRY [LARGE SCALE ANALYSIS]</scope>
    <source>
        <tissue>Root</tissue>
    </source>
</reference>
<reference key="6">
    <citation type="journal article" date="2009" name="J. Proteomics">
        <title>Phosphoproteomic analysis of nuclei-enriched fractions from Arabidopsis thaliana.</title>
        <authorList>
            <person name="Jones A.M.E."/>
            <person name="MacLean D."/>
            <person name="Studholme D.J."/>
            <person name="Serna-Sanz A."/>
            <person name="Andreasson E."/>
            <person name="Rathjen J.P."/>
            <person name="Peck S.C."/>
        </authorList>
    </citation>
    <scope>PHOSPHORYLATION [LARGE SCALE ANALYSIS] AT SER-465</scope>
    <scope>IDENTIFICATION BY MASS SPECTROMETRY [LARGE SCALE ANALYSIS]</scope>
    <source>
        <strain>cv. Columbia</strain>
    </source>
</reference>
<reference key="7">
    <citation type="journal article" date="2009" name="Plant Physiol.">
        <title>Large-scale Arabidopsis phosphoproteome profiling reveals novel chloroplast kinase substrates and phosphorylation networks.</title>
        <authorList>
            <person name="Reiland S."/>
            <person name="Messerli G."/>
            <person name="Baerenfaller K."/>
            <person name="Gerrits B."/>
            <person name="Endler A."/>
            <person name="Grossmann J."/>
            <person name="Gruissem W."/>
            <person name="Baginsky S."/>
        </authorList>
    </citation>
    <scope>PHOSPHORYLATION [LARGE SCALE ANALYSIS] AT SER-378 AND SER-381</scope>
    <scope>IDENTIFICATION BY MASS SPECTROMETRY [LARGE SCALE ANALYSIS]</scope>
</reference>
<reference key="8">
    <citation type="journal article" date="2009" name="RNA">
        <title>A comprehensive analysis of the La-motif protein superfamily.</title>
        <authorList>
            <person name="Bousquet-Antonelli C."/>
            <person name="Deragon J.M."/>
        </authorList>
    </citation>
    <scope>GENE FAMILY</scope>
    <scope>NOMENCLATURE</scope>
</reference>
<reference key="9">
    <citation type="journal article" date="2012" name="Mol. Cell. Proteomics">
        <title>Comparative large-scale characterisation of plant vs. mammal proteins reveals similar and idiosyncratic N-alpha acetylation features.</title>
        <authorList>
            <person name="Bienvenut W.V."/>
            <person name="Sumpton D."/>
            <person name="Martinez A."/>
            <person name="Lilla S."/>
            <person name="Espagne C."/>
            <person name="Meinnel T."/>
            <person name="Giglione C."/>
        </authorList>
    </citation>
    <scope>ACETYLATION [LARGE SCALE ANALYSIS] AT MET-1</scope>
    <scope>IDENTIFICATION BY MASS SPECTROMETRY [LARGE SCALE ANALYSIS]</scope>
</reference>
<reference key="10">
    <citation type="journal article" date="2013" name="Cell Rep.">
        <title>XRN4 and LARP1 are required for a heat-triggered mRNA decay pathway involved in plant acclimation and survival during thermal stress.</title>
        <authorList>
            <person name="Merret R."/>
            <person name="Descombin J."/>
            <person name="Juan Y.T."/>
            <person name="Favory J.J."/>
            <person name="Carpentier M.C."/>
            <person name="Chaparro C."/>
            <person name="Charng Y.Y."/>
            <person name="Deragon J.M."/>
            <person name="Bousquet-Antonelli C."/>
        </authorList>
    </citation>
    <scope>FUNCTION</scope>
    <scope>DISRUPTION PHENOTYPE</scope>
    <scope>INTERACTION WITH XRN4</scope>
    <scope>SUBCELLULAR LOCATION</scope>
</reference>
<evidence type="ECO:0000255" key="1">
    <source>
        <dbReference type="PROSITE-ProRule" id="PRU00332"/>
    </source>
</evidence>
<evidence type="ECO:0000256" key="2">
    <source>
        <dbReference type="SAM" id="MobiDB-lite"/>
    </source>
</evidence>
<evidence type="ECO:0000269" key="3">
    <source>
    </source>
</evidence>
<evidence type="ECO:0000305" key="4"/>
<evidence type="ECO:0007744" key="5">
    <source>
    </source>
</evidence>
<evidence type="ECO:0007744" key="6">
    <source>
    </source>
</evidence>
<evidence type="ECO:0007744" key="7">
    <source>
    </source>
</evidence>
<evidence type="ECO:0007744" key="8">
    <source>
    </source>
</evidence>
<sequence>MMAETEGSVADDRELITREGGIGTKSPWKTTTSPVETIDAPVMGAHSWPALADAAQQPRPKNPPAPAPAPPSKNIPTSIPIPTPAVTGQAKSKGGGKANPGHKNPSGRHSKPGPRSNQNGPPPPPYLVHAVPYHPPPFPPMVPLPHAAGPDFPYAPYPPYPVPVPPVTESGNEKQVQASPLPPVLPAPQGDPGKPWPHQRGFDPRNMPQGAGPRNFGRPPFMGPAPGFLVGPGPGFPGPVYYLPGPPPGAIRGPYPPRFAPYPVNQGPPILSPEKLDLRDRVLKQVEYYFSDENLENDHYLISLMDEEGWVPTKIIAGFKRVKAMTMDVDFIVYALGFSNSVEVQGDQIRKRDKWSDWIPASKKSTSAETIGDGDKDSPKSITSGDNFGNPSKGSSKPTVSDFSSEGAQSSRTNNYKSGNLKSSADEKRNVEDLSNDFSNTFLLDEELDLEHRSPRKSGLSMSKSIEYEDDDMAVDDQDIQKLVIVTQNSGKSDGAGIGGTEAKNIPKELASTINDGLYYFEQELKKKRSGRRKNNSHLDTKDGKIKSGEGLNTKLGENSAANDGGEEHGIITSRRKQNKGTHKHHTAHARRFFSSNIRNNGNISESPPSSSIGFFFGSTPPDSHGPRLSKLSSSPQCTLSGSSPPVGSLPKSFPPFQHPSHQLLEENGFKQEKYLKYRKRCLNERKKLGSGCSEEMNHLYRFWSYFLRDTFVLSMYDDFQKFALEDAAGNYDYGLECLFRFYSYGLEKHFDEDLYKDFEKLSLDFYHKGNLYGLEKYWAFHHYRGKEEPITKHPELEKLLKEEFRSIDDFRAKETITNQKENKSH</sequence>
<keyword id="KW-0007">Acetylation</keyword>
<keyword id="KW-0025">Alternative splicing</keyword>
<keyword id="KW-0963">Cytoplasm</keyword>
<keyword id="KW-0597">Phosphoprotein</keyword>
<keyword id="KW-1185">Reference proteome</keyword>
<keyword id="KW-0694">RNA-binding</keyword>
<organism>
    <name type="scientific">Arabidopsis thaliana</name>
    <name type="common">Mouse-ear cress</name>
    <dbReference type="NCBI Taxonomy" id="3702"/>
    <lineage>
        <taxon>Eukaryota</taxon>
        <taxon>Viridiplantae</taxon>
        <taxon>Streptophyta</taxon>
        <taxon>Embryophyta</taxon>
        <taxon>Tracheophyta</taxon>
        <taxon>Spermatophyta</taxon>
        <taxon>Magnoliopsida</taxon>
        <taxon>eudicotyledons</taxon>
        <taxon>Gunneridae</taxon>
        <taxon>Pentapetalae</taxon>
        <taxon>rosids</taxon>
        <taxon>malvids</taxon>
        <taxon>Brassicales</taxon>
        <taxon>Brassicaceae</taxon>
        <taxon>Camelineae</taxon>
        <taxon>Arabidopsis</taxon>
    </lineage>
</organism>
<feature type="chain" id="PRO_0000428666" description="La-related protein 1A">
    <location>
        <begin position="1"/>
        <end position="826"/>
    </location>
</feature>
<feature type="domain" description="HTH La-type RNA-binding" evidence="1">
    <location>
        <begin position="272"/>
        <end position="361"/>
    </location>
</feature>
<feature type="region of interest" description="Disordered" evidence="2">
    <location>
        <begin position="1"/>
        <end position="128"/>
    </location>
</feature>
<feature type="region of interest" description="Disordered" evidence="2">
    <location>
        <begin position="366"/>
        <end position="428"/>
    </location>
</feature>
<feature type="region of interest" description="Disordered" evidence="2">
    <location>
        <begin position="527"/>
        <end position="649"/>
    </location>
</feature>
<feature type="compositionally biased region" description="Pro residues" evidence="2">
    <location>
        <begin position="60"/>
        <end position="83"/>
    </location>
</feature>
<feature type="compositionally biased region" description="Polar residues" evidence="2">
    <location>
        <begin position="380"/>
        <end position="423"/>
    </location>
</feature>
<feature type="compositionally biased region" description="Basic residues" evidence="2">
    <location>
        <begin position="527"/>
        <end position="536"/>
    </location>
</feature>
<feature type="compositionally biased region" description="Basic and acidic residues" evidence="2">
    <location>
        <begin position="537"/>
        <end position="548"/>
    </location>
</feature>
<feature type="compositionally biased region" description="Basic residues" evidence="2">
    <location>
        <begin position="574"/>
        <end position="592"/>
    </location>
</feature>
<feature type="compositionally biased region" description="Low complexity" evidence="2">
    <location>
        <begin position="600"/>
        <end position="619"/>
    </location>
</feature>
<feature type="compositionally biased region" description="Low complexity" evidence="2">
    <location>
        <begin position="640"/>
        <end position="649"/>
    </location>
</feature>
<feature type="modified residue" description="N-acetylmethionine" evidence="8">
    <location>
        <position position="1"/>
    </location>
</feature>
<feature type="modified residue" description="Phosphoserine" evidence="5 7">
    <location>
        <position position="378"/>
    </location>
</feature>
<feature type="modified residue" description="Phosphoserine" evidence="5 7">
    <location>
        <position position="381"/>
    </location>
</feature>
<feature type="modified residue" description="Phosphoserine" evidence="6">
    <location>
        <position position="465"/>
    </location>
</feature>
<gene>
    <name type="primary">LARP1A</name>
    <name type="ordered locus">At5g21160</name>
    <name type="ORF">T10F18.190</name>
</gene>
<comment type="function">
    <text evidence="3">Required for acclimation and survival during thermal stress. Heat-specific cofactor of XRN4 required for its targeting to polysomes and subsequent rapid degradation of seedling transcriptome during the early steps of the heat stress response.</text>
</comment>
<comment type="subunit">
    <text evidence="3">Interacts with XRN4 and facilitates its attachment to polysomes upon heat stress.</text>
</comment>
<comment type="subcellular location">
    <subcellularLocation>
        <location evidence="3">Cytoplasm</location>
        <location evidence="3">P-body</location>
    </subcellularLocation>
    <subcellularLocation>
        <location evidence="3">Cytoplasm</location>
        <location evidence="3">Cytosol</location>
    </subcellularLocation>
    <text>Translocates from cytosol to P-bodies upon heat stress.</text>
</comment>
<comment type="alternative products">
    <event type="alternative splicing"/>
    <isoform>
        <id>Q940X9-1</id>
        <name>1</name>
        <sequence type="displayed"/>
    </isoform>
    <text>Additional isoforms seem to exist.</text>
</comment>
<comment type="disruption phenotype">
    <text evidence="3">Reduced heat-induced fold reduction of mRNAs and impaired attachment of XNR4 to polysomes.</text>
</comment>
<comment type="similarity">
    <text evidence="4">Belongs to the LARP family.</text>
</comment>
<proteinExistence type="evidence at protein level"/>
<accession>Q940X9</accession>
<accession>Q56WZ6</accession>
<name>LRP1A_ARATH</name>
<protein>
    <recommendedName>
        <fullName>La-related protein 1A</fullName>
        <shortName>AtLARP1a</shortName>
    </recommendedName>
</protein>
<dbReference type="EMBL" id="AC140977">
    <property type="protein sequence ID" value="AAO73903.1"/>
    <property type="molecule type" value="Genomic_DNA"/>
</dbReference>
<dbReference type="EMBL" id="CP002688">
    <property type="protein sequence ID" value="AED92941.1"/>
    <property type="molecule type" value="Genomic_DNA"/>
</dbReference>
<dbReference type="EMBL" id="AY052365">
    <property type="protein sequence ID" value="AAK96556.1"/>
    <property type="molecule type" value="mRNA"/>
</dbReference>
<dbReference type="EMBL" id="AY139801">
    <property type="protein sequence ID" value="AAM98107.1"/>
    <property type="molecule type" value="mRNA"/>
</dbReference>
<dbReference type="EMBL" id="AK221883">
    <property type="protein sequence ID" value="BAD94211.1"/>
    <property type="molecule type" value="mRNA"/>
</dbReference>
<dbReference type="RefSeq" id="NP_568409.1">
    <molecule id="Q940X9-1"/>
    <property type="nucleotide sequence ID" value="NM_122123.3"/>
</dbReference>
<dbReference type="SMR" id="Q940X9"/>
<dbReference type="BioGRID" id="17517">
    <property type="interactions" value="3"/>
</dbReference>
<dbReference type="FunCoup" id="Q940X9">
    <property type="interactions" value="2378"/>
</dbReference>
<dbReference type="IntAct" id="Q940X9">
    <property type="interactions" value="3"/>
</dbReference>
<dbReference type="STRING" id="3702.Q940X9"/>
<dbReference type="GlyGen" id="Q940X9">
    <property type="glycosylation" value="2 sites"/>
</dbReference>
<dbReference type="iPTMnet" id="Q940X9"/>
<dbReference type="PaxDb" id="3702-AT5G21160.3"/>
<dbReference type="EnsemblPlants" id="AT5G21160.1">
    <molecule id="Q940X9-1"/>
    <property type="protein sequence ID" value="AT5G21160.1"/>
    <property type="gene ID" value="AT5G21160"/>
</dbReference>
<dbReference type="GeneID" id="832242"/>
<dbReference type="Gramene" id="AT5G21160.1">
    <molecule id="Q940X9-1"/>
    <property type="protein sequence ID" value="AT5G21160.1"/>
    <property type="gene ID" value="AT5G21160"/>
</dbReference>
<dbReference type="KEGG" id="ath:AT5G21160"/>
<dbReference type="Araport" id="AT5G21160"/>
<dbReference type="TAIR" id="AT5G21160">
    <property type="gene designation" value="LARP1A"/>
</dbReference>
<dbReference type="eggNOG" id="KOG2590">
    <property type="taxonomic scope" value="Eukaryota"/>
</dbReference>
<dbReference type="HOGENOM" id="CLU_336291_0_0_1"/>
<dbReference type="InParanoid" id="Q940X9"/>
<dbReference type="PhylomeDB" id="Q940X9"/>
<dbReference type="CD-CODE" id="4299E36E">
    <property type="entry name" value="Nucleolus"/>
</dbReference>
<dbReference type="PRO" id="PR:Q940X9"/>
<dbReference type="Proteomes" id="UP000006548">
    <property type="component" value="Chromosome 5"/>
</dbReference>
<dbReference type="ExpressionAtlas" id="Q940X9">
    <property type="expression patterns" value="baseline and differential"/>
</dbReference>
<dbReference type="GO" id="GO:0005829">
    <property type="term" value="C:cytosol"/>
    <property type="evidence" value="ECO:0000314"/>
    <property type="project" value="UniProtKB"/>
</dbReference>
<dbReference type="GO" id="GO:0000932">
    <property type="term" value="C:P-body"/>
    <property type="evidence" value="ECO:0000314"/>
    <property type="project" value="UniProtKB"/>
</dbReference>
<dbReference type="GO" id="GO:0000339">
    <property type="term" value="F:RNA cap binding"/>
    <property type="evidence" value="ECO:0007669"/>
    <property type="project" value="InterPro"/>
</dbReference>
<dbReference type="GO" id="GO:0010286">
    <property type="term" value="P:heat acclimation"/>
    <property type="evidence" value="ECO:0000315"/>
    <property type="project" value="UniProtKB"/>
</dbReference>
<dbReference type="GO" id="GO:0006402">
    <property type="term" value="P:mRNA catabolic process"/>
    <property type="evidence" value="ECO:0000315"/>
    <property type="project" value="UniProtKB"/>
</dbReference>
<dbReference type="GO" id="GO:0048255">
    <property type="term" value="P:mRNA stabilization"/>
    <property type="evidence" value="ECO:0007669"/>
    <property type="project" value="InterPro"/>
</dbReference>
<dbReference type="CDD" id="cd07323">
    <property type="entry name" value="LAM"/>
    <property type="match status" value="1"/>
</dbReference>
<dbReference type="FunFam" id="1.10.10.10:FF:000131">
    <property type="entry name" value="la-related protein 1B isoform X2"/>
    <property type="match status" value="1"/>
</dbReference>
<dbReference type="Gene3D" id="1.10.10.10">
    <property type="entry name" value="Winged helix-like DNA-binding domain superfamily/Winged helix DNA-binding domain"/>
    <property type="match status" value="1"/>
</dbReference>
<dbReference type="InterPro" id="IPR006607">
    <property type="entry name" value="DM15"/>
</dbReference>
<dbReference type="InterPro" id="IPR045180">
    <property type="entry name" value="La_dom_prot"/>
</dbReference>
<dbReference type="InterPro" id="IPR006630">
    <property type="entry name" value="La_HTH"/>
</dbReference>
<dbReference type="InterPro" id="IPR036388">
    <property type="entry name" value="WH-like_DNA-bd_sf"/>
</dbReference>
<dbReference type="InterPro" id="IPR036390">
    <property type="entry name" value="WH_DNA-bd_sf"/>
</dbReference>
<dbReference type="PANTHER" id="PTHR22792:SF101">
    <property type="entry name" value="LA-RELATED PROTEIN 1A"/>
    <property type="match status" value="1"/>
</dbReference>
<dbReference type="PANTHER" id="PTHR22792">
    <property type="entry name" value="LUPUS LA PROTEIN-RELATED"/>
    <property type="match status" value="1"/>
</dbReference>
<dbReference type="Pfam" id="PF05383">
    <property type="entry name" value="La"/>
    <property type="match status" value="1"/>
</dbReference>
<dbReference type="Pfam" id="PF21071">
    <property type="entry name" value="LARP1_HEAT"/>
    <property type="match status" value="1"/>
</dbReference>
<dbReference type="SMART" id="SM00684">
    <property type="entry name" value="DM15"/>
    <property type="match status" value="3"/>
</dbReference>
<dbReference type="SMART" id="SM00715">
    <property type="entry name" value="LA"/>
    <property type="match status" value="1"/>
</dbReference>
<dbReference type="SUPFAM" id="SSF46785">
    <property type="entry name" value="Winged helix' DNA-binding domain"/>
    <property type="match status" value="1"/>
</dbReference>
<dbReference type="PROSITE" id="PS50961">
    <property type="entry name" value="HTH_LA"/>
    <property type="match status" value="1"/>
</dbReference>